<gene>
    <name type="primary">pepA</name>
    <name type="ordered locus">HP_0570</name>
</gene>
<comment type="function">
    <text evidence="1">Presumably involved in the processing and regular turnover of intracellular proteins. Catalyzes the removal of unsubstituted N-terminal amino acids from various peptides (By similarity).</text>
</comment>
<comment type="catalytic activity">
    <reaction>
        <text>Release of an N-terminal amino acid, Xaa-|-Yaa-, in which Xaa is preferably Leu, but may be other amino acids including Pro although not Arg or Lys, and Yaa may be Pro. Amino acid amides and methyl esters are also readily hydrolyzed, but rates on arylamides are exceedingly low.</text>
        <dbReference type="EC" id="3.4.11.1"/>
    </reaction>
</comment>
<comment type="catalytic activity">
    <reaction>
        <text>Release of an N-terminal amino acid, preferentially leucine, but not glutamic or aspartic acids.</text>
        <dbReference type="EC" id="3.4.11.10"/>
    </reaction>
</comment>
<comment type="cofactor">
    <cofactor evidence="1">
        <name>Mn(2+)</name>
        <dbReference type="ChEBI" id="CHEBI:29035"/>
    </cofactor>
    <text evidence="1">Binds 2 manganese ions per subunit.</text>
</comment>
<comment type="subcellular location">
    <subcellularLocation>
        <location evidence="1">Cytoplasm</location>
    </subcellularLocation>
</comment>
<comment type="similarity">
    <text evidence="3">Belongs to the peptidase M17 family.</text>
</comment>
<protein>
    <recommendedName>
        <fullName>Cytosol aminopeptidase</fullName>
        <ecNumber>3.4.11.1</ecNumber>
    </recommendedName>
    <alternativeName>
        <fullName>Leucine aminopeptidase</fullName>
        <shortName>LAP</shortName>
        <ecNumber>3.4.11.10</ecNumber>
    </alternativeName>
    <alternativeName>
        <fullName>Leucyl aminopeptidase</fullName>
    </alternativeName>
</protein>
<feature type="chain" id="PRO_0000165760" description="Cytosol aminopeptidase">
    <location>
        <begin position="1"/>
        <end position="496"/>
    </location>
</feature>
<feature type="active site" evidence="2">
    <location>
        <position position="270"/>
    </location>
</feature>
<feature type="active site" evidence="2">
    <location>
        <position position="344"/>
    </location>
</feature>
<feature type="binding site" evidence="1">
    <location>
        <position position="258"/>
    </location>
    <ligand>
        <name>Mn(2+)</name>
        <dbReference type="ChEBI" id="CHEBI:29035"/>
        <label>2</label>
    </ligand>
</feature>
<feature type="binding site" evidence="1">
    <location>
        <position position="263"/>
    </location>
    <ligand>
        <name>Mn(2+)</name>
        <dbReference type="ChEBI" id="CHEBI:29035"/>
        <label>1</label>
    </ligand>
</feature>
<feature type="binding site" evidence="1">
    <location>
        <position position="263"/>
    </location>
    <ligand>
        <name>Mn(2+)</name>
        <dbReference type="ChEBI" id="CHEBI:29035"/>
        <label>2</label>
    </ligand>
</feature>
<feature type="binding site" evidence="1">
    <location>
        <position position="281"/>
    </location>
    <ligand>
        <name>Mn(2+)</name>
        <dbReference type="ChEBI" id="CHEBI:29035"/>
        <label>2</label>
    </ligand>
</feature>
<feature type="binding site" evidence="1">
    <location>
        <position position="340"/>
    </location>
    <ligand>
        <name>Mn(2+)</name>
        <dbReference type="ChEBI" id="CHEBI:29035"/>
        <label>1</label>
    </ligand>
</feature>
<feature type="binding site" evidence="1">
    <location>
        <position position="342"/>
    </location>
    <ligand>
        <name>Mn(2+)</name>
        <dbReference type="ChEBI" id="CHEBI:29035"/>
        <label>1</label>
    </ligand>
</feature>
<feature type="binding site" evidence="1">
    <location>
        <position position="342"/>
    </location>
    <ligand>
        <name>Mn(2+)</name>
        <dbReference type="ChEBI" id="CHEBI:29035"/>
        <label>2</label>
    </ligand>
</feature>
<feature type="strand" evidence="4">
    <location>
        <begin position="3"/>
        <end position="9"/>
    </location>
</feature>
<feature type="turn" evidence="4">
    <location>
        <begin position="11"/>
        <end position="13"/>
    </location>
</feature>
<feature type="strand" evidence="4">
    <location>
        <begin position="17"/>
        <end position="24"/>
    </location>
</feature>
<feature type="helix" evidence="4">
    <location>
        <begin position="36"/>
        <end position="41"/>
    </location>
</feature>
<feature type="strand" evidence="4">
    <location>
        <begin position="46"/>
        <end position="52"/>
    </location>
</feature>
<feature type="turn" evidence="4">
    <location>
        <begin position="53"/>
        <end position="56"/>
    </location>
</feature>
<feature type="strand" evidence="4">
    <location>
        <begin position="57"/>
        <end position="66"/>
    </location>
</feature>
<feature type="helix" evidence="4">
    <location>
        <begin position="67"/>
        <end position="82"/>
    </location>
</feature>
<feature type="strand" evidence="4">
    <location>
        <begin position="87"/>
        <end position="93"/>
    </location>
</feature>
<feature type="helix" evidence="4">
    <location>
        <begin position="104"/>
        <end position="118"/>
    </location>
</feature>
<feature type="strand" evidence="4">
    <location>
        <begin position="137"/>
        <end position="144"/>
    </location>
</feature>
<feature type="helix" evidence="4">
    <location>
        <begin position="156"/>
        <end position="182"/>
    </location>
</feature>
<feature type="turn" evidence="4">
    <location>
        <begin position="185"/>
        <end position="187"/>
    </location>
</feature>
<feature type="helix" evidence="4">
    <location>
        <begin position="190"/>
        <end position="204"/>
    </location>
</feature>
<feature type="strand" evidence="4">
    <location>
        <begin position="207"/>
        <end position="211"/>
    </location>
</feature>
<feature type="helix" evidence="4">
    <location>
        <begin position="213"/>
        <end position="218"/>
    </location>
</feature>
<feature type="helix" evidence="4">
    <location>
        <begin position="222"/>
        <end position="228"/>
    </location>
</feature>
<feature type="turn" evidence="4">
    <location>
        <begin position="229"/>
        <end position="234"/>
    </location>
</feature>
<feature type="strand" evidence="4">
    <location>
        <begin position="238"/>
        <end position="244"/>
    </location>
</feature>
<feature type="strand" evidence="4">
    <location>
        <begin position="252"/>
        <end position="263"/>
    </location>
</feature>
<feature type="helix" evidence="4">
    <location>
        <begin position="272"/>
        <end position="275"/>
    </location>
</feature>
<feature type="helix" evidence="4">
    <location>
        <begin position="278"/>
        <end position="282"/>
    </location>
</feature>
<feature type="helix" evidence="4">
    <location>
        <begin position="283"/>
        <end position="298"/>
    </location>
</feature>
<feature type="strand" evidence="4">
    <location>
        <begin position="301"/>
        <end position="313"/>
    </location>
</feature>
<feature type="strand" evidence="4">
    <location>
        <begin position="325"/>
        <end position="327"/>
    </location>
</feature>
<feature type="strand" evidence="4">
    <location>
        <begin position="333"/>
        <end position="335"/>
    </location>
</feature>
<feature type="helix" evidence="4">
    <location>
        <begin position="343"/>
        <end position="355"/>
    </location>
</feature>
<feature type="strand" evidence="4">
    <location>
        <begin position="360"/>
        <end position="366"/>
    </location>
</feature>
<feature type="helix" evidence="4">
    <location>
        <begin position="370"/>
        <end position="376"/>
    </location>
</feature>
<feature type="strand" evidence="4">
    <location>
        <begin position="380"/>
        <end position="386"/>
    </location>
</feature>
<feature type="helix" evidence="4">
    <location>
        <begin position="388"/>
        <end position="401"/>
    </location>
</feature>
<feature type="strand" evidence="4">
    <location>
        <begin position="404"/>
        <end position="407"/>
    </location>
</feature>
<feature type="helix" evidence="4">
    <location>
        <begin position="412"/>
        <end position="415"/>
    </location>
</feature>
<feature type="helix" evidence="4">
    <location>
        <begin position="416"/>
        <end position="418"/>
    </location>
</feature>
<feature type="strand" evidence="4">
    <location>
        <begin position="421"/>
        <end position="428"/>
    </location>
</feature>
<feature type="strand" evidence="4">
    <location>
        <begin position="430"/>
        <end position="433"/>
    </location>
</feature>
<feature type="helix" evidence="4">
    <location>
        <begin position="435"/>
        <end position="444"/>
    </location>
</feature>
<feature type="helix" evidence="4">
    <location>
        <begin position="449"/>
        <end position="454"/>
    </location>
</feature>
<feature type="strand" evidence="4">
    <location>
        <begin position="455"/>
        <end position="459"/>
    </location>
</feature>
<feature type="turn" evidence="4">
    <location>
        <begin position="461"/>
        <end position="464"/>
    </location>
</feature>
<feature type="strand" evidence="4">
    <location>
        <begin position="465"/>
        <end position="468"/>
    </location>
</feature>
<feature type="strand" evidence="4">
    <location>
        <begin position="475"/>
        <end position="477"/>
    </location>
</feature>
<feature type="helix" evidence="4">
    <location>
        <begin position="482"/>
        <end position="494"/>
    </location>
</feature>
<reference key="1">
    <citation type="journal article" date="1997" name="Nature">
        <title>The complete genome sequence of the gastric pathogen Helicobacter pylori.</title>
        <authorList>
            <person name="Tomb J.-F."/>
            <person name="White O."/>
            <person name="Kerlavage A.R."/>
            <person name="Clayton R.A."/>
            <person name="Sutton G.G."/>
            <person name="Fleischmann R.D."/>
            <person name="Ketchum K.A."/>
            <person name="Klenk H.-P."/>
            <person name="Gill S.R."/>
            <person name="Dougherty B.A."/>
            <person name="Nelson K.E."/>
            <person name="Quackenbush J."/>
            <person name="Zhou L."/>
            <person name="Kirkness E.F."/>
            <person name="Peterson S.N."/>
            <person name="Loftus B.J."/>
            <person name="Richardson D.L."/>
            <person name="Dodson R.J."/>
            <person name="Khalak H.G."/>
            <person name="Glodek A."/>
            <person name="McKenney K."/>
            <person name="FitzGerald L.M."/>
            <person name="Lee N."/>
            <person name="Adams M.D."/>
            <person name="Hickey E.K."/>
            <person name="Berg D.E."/>
            <person name="Gocayne J.D."/>
            <person name="Utterback T.R."/>
            <person name="Peterson J.D."/>
            <person name="Kelley J.M."/>
            <person name="Cotton M.D."/>
            <person name="Weidman J.F."/>
            <person name="Fujii C."/>
            <person name="Bowman C."/>
            <person name="Watthey L."/>
            <person name="Wallin E."/>
            <person name="Hayes W.S."/>
            <person name="Borodovsky M."/>
            <person name="Karp P.D."/>
            <person name="Smith H.O."/>
            <person name="Fraser C.M."/>
            <person name="Venter J.C."/>
        </authorList>
    </citation>
    <scope>NUCLEOTIDE SEQUENCE [LARGE SCALE GENOMIC DNA]</scope>
    <source>
        <strain>ATCC 700392 / 26695</strain>
    </source>
</reference>
<accession>O25294</accession>
<sequence>MLKIKLEKTTFENAKAECSLVFIINKDFSHAWVKNKELLETFKYEGEGVFLDQENKILYAGVKEDDVHLLRESACLAVRTLKKLAFKSVKVGVYTCGAHSKDNALLENLKALFLGLKLGLYEYDTFKSNKKESVLKEAIVALELHKPCEKTCANSLEKSAKEALKYAEIMTESLNIVKDLVNTPPMIGTPVYMAEVAQKVAKENHLEIHVHDEKFLEEKKMNAFLAVNKASLSVNPPRLIHLVYKPKKAKKKIALVGKGLTYDCGGLSLKPADYMVTMKADKGGGSAVIGLLNALAKLGVEAEVHGIIGATENMIGPAAYKPDDILISKEGKSIEVRNTDAEGRLVLADCLSYAQDLNPDVIVDFATLTGACVVGLGEFTSAIMGHNEELKNLFETSGLESGELLAKLPFNRHLKKLIESKIADVCNISSSRYGGAITAGLFLNEFIRDEFKDKWLHIDIAGPAYVEKEWDVNSFGASGAGVRACTAFVEELLKKA</sequence>
<name>AMPA_HELPY</name>
<proteinExistence type="evidence at protein level"/>
<evidence type="ECO:0000250" key="1"/>
<evidence type="ECO:0000255" key="2"/>
<evidence type="ECO:0000305" key="3"/>
<evidence type="ECO:0007829" key="4">
    <source>
        <dbReference type="PDB" id="4ZLA"/>
    </source>
</evidence>
<organism>
    <name type="scientific">Helicobacter pylori (strain ATCC 700392 / 26695)</name>
    <name type="common">Campylobacter pylori</name>
    <dbReference type="NCBI Taxonomy" id="85962"/>
    <lineage>
        <taxon>Bacteria</taxon>
        <taxon>Pseudomonadati</taxon>
        <taxon>Campylobacterota</taxon>
        <taxon>Epsilonproteobacteria</taxon>
        <taxon>Campylobacterales</taxon>
        <taxon>Helicobacteraceae</taxon>
        <taxon>Helicobacter</taxon>
    </lineage>
</organism>
<dbReference type="EC" id="3.4.11.1"/>
<dbReference type="EC" id="3.4.11.10"/>
<dbReference type="EMBL" id="AE000511">
    <property type="protein sequence ID" value="AAD07638.1"/>
    <property type="molecule type" value="Genomic_DNA"/>
</dbReference>
<dbReference type="PIR" id="B64591">
    <property type="entry name" value="B64591"/>
</dbReference>
<dbReference type="RefSeq" id="NP_207365.1">
    <property type="nucleotide sequence ID" value="NC_000915.1"/>
</dbReference>
<dbReference type="RefSeq" id="WP_000912892.1">
    <property type="nucleotide sequence ID" value="NC_018939.1"/>
</dbReference>
<dbReference type="PDB" id="4ZI6">
    <property type="method" value="X-ray"/>
    <property type="resolution" value="2.00 A"/>
    <property type="chains" value="A/B/C/D/E/F=1-496"/>
</dbReference>
<dbReference type="PDB" id="4ZLA">
    <property type="method" value="X-ray"/>
    <property type="resolution" value="1.90 A"/>
    <property type="chains" value="A/B/C/D/E/F=1-496"/>
</dbReference>
<dbReference type="PDBsum" id="4ZI6"/>
<dbReference type="PDBsum" id="4ZLA"/>
<dbReference type="SMR" id="O25294"/>
<dbReference type="DIP" id="DIP-3140N"/>
<dbReference type="FunCoup" id="O25294">
    <property type="interactions" value="290"/>
</dbReference>
<dbReference type="IntAct" id="O25294">
    <property type="interactions" value="3"/>
</dbReference>
<dbReference type="MINT" id="O25294"/>
<dbReference type="STRING" id="85962.HP_0570"/>
<dbReference type="MEROPS" id="M17.016"/>
<dbReference type="PaxDb" id="85962-C694_02940"/>
<dbReference type="EnsemblBacteria" id="AAD07638">
    <property type="protein sequence ID" value="AAD07638"/>
    <property type="gene ID" value="HP_0570"/>
</dbReference>
<dbReference type="KEGG" id="heo:C694_02940"/>
<dbReference type="KEGG" id="hpy:HP_0570"/>
<dbReference type="PATRIC" id="fig|85962.47.peg.615"/>
<dbReference type="eggNOG" id="COG0260">
    <property type="taxonomic scope" value="Bacteria"/>
</dbReference>
<dbReference type="InParanoid" id="O25294"/>
<dbReference type="OrthoDB" id="9809354at2"/>
<dbReference type="PhylomeDB" id="O25294"/>
<dbReference type="BRENDA" id="3.4.11.10">
    <property type="organism ID" value="2604"/>
</dbReference>
<dbReference type="EvolutionaryTrace" id="O25294"/>
<dbReference type="Proteomes" id="UP000000429">
    <property type="component" value="Chromosome"/>
</dbReference>
<dbReference type="GO" id="GO:0005737">
    <property type="term" value="C:cytoplasm"/>
    <property type="evidence" value="ECO:0000318"/>
    <property type="project" value="GO_Central"/>
</dbReference>
<dbReference type="GO" id="GO:0004177">
    <property type="term" value="F:aminopeptidase activity"/>
    <property type="evidence" value="ECO:0000318"/>
    <property type="project" value="GO_Central"/>
</dbReference>
<dbReference type="GO" id="GO:0030145">
    <property type="term" value="F:manganese ion binding"/>
    <property type="evidence" value="ECO:0007669"/>
    <property type="project" value="UniProtKB-UniRule"/>
</dbReference>
<dbReference type="GO" id="GO:0070006">
    <property type="term" value="F:metalloaminopeptidase activity"/>
    <property type="evidence" value="ECO:0007669"/>
    <property type="project" value="InterPro"/>
</dbReference>
<dbReference type="GO" id="GO:0006508">
    <property type="term" value="P:proteolysis"/>
    <property type="evidence" value="ECO:0000318"/>
    <property type="project" value="GO_Central"/>
</dbReference>
<dbReference type="CDD" id="cd00433">
    <property type="entry name" value="Peptidase_M17"/>
    <property type="match status" value="1"/>
</dbReference>
<dbReference type="Gene3D" id="3.40.220.10">
    <property type="entry name" value="Leucine Aminopeptidase, subunit E, domain 1"/>
    <property type="match status" value="1"/>
</dbReference>
<dbReference type="Gene3D" id="3.40.630.10">
    <property type="entry name" value="Zn peptidases"/>
    <property type="match status" value="1"/>
</dbReference>
<dbReference type="HAMAP" id="MF_00181">
    <property type="entry name" value="Cytosol_peptidase_M17"/>
    <property type="match status" value="1"/>
</dbReference>
<dbReference type="InterPro" id="IPR011356">
    <property type="entry name" value="Leucine_aapep/pepB"/>
</dbReference>
<dbReference type="InterPro" id="IPR043472">
    <property type="entry name" value="Macro_dom-like"/>
</dbReference>
<dbReference type="InterPro" id="IPR000819">
    <property type="entry name" value="Peptidase_M17_C"/>
</dbReference>
<dbReference type="InterPro" id="IPR023042">
    <property type="entry name" value="Peptidase_M17_leu_NH2_pept"/>
</dbReference>
<dbReference type="InterPro" id="IPR008283">
    <property type="entry name" value="Peptidase_M17_N"/>
</dbReference>
<dbReference type="NCBIfam" id="NF002079">
    <property type="entry name" value="PRK00913.3-1"/>
    <property type="match status" value="1"/>
</dbReference>
<dbReference type="NCBIfam" id="NF002081">
    <property type="entry name" value="PRK00913.3-3"/>
    <property type="match status" value="1"/>
</dbReference>
<dbReference type="PANTHER" id="PTHR11963:SF23">
    <property type="entry name" value="CYTOSOL AMINOPEPTIDASE"/>
    <property type="match status" value="1"/>
</dbReference>
<dbReference type="PANTHER" id="PTHR11963">
    <property type="entry name" value="LEUCINE AMINOPEPTIDASE-RELATED"/>
    <property type="match status" value="1"/>
</dbReference>
<dbReference type="Pfam" id="PF00883">
    <property type="entry name" value="Peptidase_M17"/>
    <property type="match status" value="1"/>
</dbReference>
<dbReference type="Pfam" id="PF02789">
    <property type="entry name" value="Peptidase_M17_N"/>
    <property type="match status" value="1"/>
</dbReference>
<dbReference type="PRINTS" id="PR00481">
    <property type="entry name" value="LAMNOPPTDASE"/>
</dbReference>
<dbReference type="SUPFAM" id="SSF52949">
    <property type="entry name" value="Macro domain-like"/>
    <property type="match status" value="1"/>
</dbReference>
<dbReference type="SUPFAM" id="SSF53187">
    <property type="entry name" value="Zn-dependent exopeptidases"/>
    <property type="match status" value="1"/>
</dbReference>
<dbReference type="PROSITE" id="PS00631">
    <property type="entry name" value="CYTOSOL_AP"/>
    <property type="match status" value="1"/>
</dbReference>
<keyword id="KW-0002">3D-structure</keyword>
<keyword id="KW-0031">Aminopeptidase</keyword>
<keyword id="KW-0963">Cytoplasm</keyword>
<keyword id="KW-0378">Hydrolase</keyword>
<keyword id="KW-0464">Manganese</keyword>
<keyword id="KW-0479">Metal-binding</keyword>
<keyword id="KW-0645">Protease</keyword>
<keyword id="KW-1185">Reference proteome</keyword>